<evidence type="ECO:0000255" key="1">
    <source>
        <dbReference type="HAMAP-Rule" id="MF_00185"/>
    </source>
</evidence>
<name>MIAA_YERPN</name>
<accession>Q1CEF4</accession>
<accession>C4GY12</accession>
<feature type="chain" id="PRO_1000020689" description="tRNA dimethylallyltransferase">
    <location>
        <begin position="1"/>
        <end position="313"/>
    </location>
</feature>
<feature type="region of interest" description="Interaction with substrate tRNA" evidence="1">
    <location>
        <begin position="42"/>
        <end position="45"/>
    </location>
</feature>
<feature type="region of interest" description="Interaction with substrate tRNA" evidence="1">
    <location>
        <begin position="166"/>
        <end position="170"/>
    </location>
</feature>
<feature type="region of interest" description="Interaction with substrate tRNA" evidence="1">
    <location>
        <begin position="247"/>
        <end position="252"/>
    </location>
</feature>
<feature type="binding site" evidence="1">
    <location>
        <begin position="17"/>
        <end position="24"/>
    </location>
    <ligand>
        <name>ATP</name>
        <dbReference type="ChEBI" id="CHEBI:30616"/>
    </ligand>
</feature>
<feature type="binding site" evidence="1">
    <location>
        <begin position="19"/>
        <end position="24"/>
    </location>
    <ligand>
        <name>substrate</name>
    </ligand>
</feature>
<feature type="site" description="Interaction with substrate tRNA" evidence="1">
    <location>
        <position position="108"/>
    </location>
</feature>
<feature type="site" description="Interaction with substrate tRNA" evidence="1">
    <location>
        <position position="130"/>
    </location>
</feature>
<dbReference type="EC" id="2.5.1.75" evidence="1"/>
<dbReference type="EMBL" id="CP000305">
    <property type="protein sequence ID" value="ABG19626.1"/>
    <property type="molecule type" value="Genomic_DNA"/>
</dbReference>
<dbReference type="EMBL" id="ACNQ01000017">
    <property type="protein sequence ID" value="EEO75812.1"/>
    <property type="molecule type" value="Genomic_DNA"/>
</dbReference>
<dbReference type="RefSeq" id="WP_002209149.1">
    <property type="nucleotide sequence ID" value="NZ_ACNQ01000017.1"/>
</dbReference>
<dbReference type="SMR" id="Q1CEF4"/>
<dbReference type="GeneID" id="57974235"/>
<dbReference type="KEGG" id="ypn:YPN_3299"/>
<dbReference type="HOGENOM" id="CLU_032616_0_0_6"/>
<dbReference type="Proteomes" id="UP000008936">
    <property type="component" value="Chromosome"/>
</dbReference>
<dbReference type="GO" id="GO:0005524">
    <property type="term" value="F:ATP binding"/>
    <property type="evidence" value="ECO:0007669"/>
    <property type="project" value="UniProtKB-UniRule"/>
</dbReference>
<dbReference type="GO" id="GO:0052381">
    <property type="term" value="F:tRNA dimethylallyltransferase activity"/>
    <property type="evidence" value="ECO:0007669"/>
    <property type="project" value="UniProtKB-UniRule"/>
</dbReference>
<dbReference type="GO" id="GO:0006400">
    <property type="term" value="P:tRNA modification"/>
    <property type="evidence" value="ECO:0007669"/>
    <property type="project" value="TreeGrafter"/>
</dbReference>
<dbReference type="FunFam" id="1.10.20.140:FF:000001">
    <property type="entry name" value="tRNA dimethylallyltransferase"/>
    <property type="match status" value="1"/>
</dbReference>
<dbReference type="Gene3D" id="1.10.20.140">
    <property type="match status" value="1"/>
</dbReference>
<dbReference type="Gene3D" id="3.40.50.300">
    <property type="entry name" value="P-loop containing nucleotide triphosphate hydrolases"/>
    <property type="match status" value="1"/>
</dbReference>
<dbReference type="HAMAP" id="MF_00185">
    <property type="entry name" value="IPP_trans"/>
    <property type="match status" value="1"/>
</dbReference>
<dbReference type="InterPro" id="IPR039657">
    <property type="entry name" value="Dimethylallyltransferase"/>
</dbReference>
<dbReference type="InterPro" id="IPR018022">
    <property type="entry name" value="IPT"/>
</dbReference>
<dbReference type="InterPro" id="IPR027417">
    <property type="entry name" value="P-loop_NTPase"/>
</dbReference>
<dbReference type="NCBIfam" id="TIGR00174">
    <property type="entry name" value="miaA"/>
    <property type="match status" value="1"/>
</dbReference>
<dbReference type="PANTHER" id="PTHR11088">
    <property type="entry name" value="TRNA DIMETHYLALLYLTRANSFERASE"/>
    <property type="match status" value="1"/>
</dbReference>
<dbReference type="PANTHER" id="PTHR11088:SF60">
    <property type="entry name" value="TRNA DIMETHYLALLYLTRANSFERASE"/>
    <property type="match status" value="1"/>
</dbReference>
<dbReference type="Pfam" id="PF01715">
    <property type="entry name" value="IPPT"/>
    <property type="match status" value="1"/>
</dbReference>
<dbReference type="SUPFAM" id="SSF52540">
    <property type="entry name" value="P-loop containing nucleoside triphosphate hydrolases"/>
    <property type="match status" value="1"/>
</dbReference>
<organism>
    <name type="scientific">Yersinia pestis bv. Antiqua (strain Nepal516)</name>
    <dbReference type="NCBI Taxonomy" id="377628"/>
    <lineage>
        <taxon>Bacteria</taxon>
        <taxon>Pseudomonadati</taxon>
        <taxon>Pseudomonadota</taxon>
        <taxon>Gammaproteobacteria</taxon>
        <taxon>Enterobacterales</taxon>
        <taxon>Yersiniaceae</taxon>
        <taxon>Yersinia</taxon>
    </lineage>
</organism>
<gene>
    <name evidence="1" type="primary">miaA</name>
    <name type="ordered locus">YPN_3299</name>
    <name type="ORF">YP516_3748</name>
</gene>
<proteinExistence type="inferred from homology"/>
<comment type="function">
    <text evidence="1">Catalyzes the transfer of a dimethylallyl group onto the adenine at position 37 in tRNAs that read codons beginning with uridine, leading to the formation of N6-(dimethylallyl)adenosine (i(6)A).</text>
</comment>
<comment type="catalytic activity">
    <reaction evidence="1">
        <text>adenosine(37) in tRNA + dimethylallyl diphosphate = N(6)-dimethylallyladenosine(37) in tRNA + diphosphate</text>
        <dbReference type="Rhea" id="RHEA:26482"/>
        <dbReference type="Rhea" id="RHEA-COMP:10162"/>
        <dbReference type="Rhea" id="RHEA-COMP:10375"/>
        <dbReference type="ChEBI" id="CHEBI:33019"/>
        <dbReference type="ChEBI" id="CHEBI:57623"/>
        <dbReference type="ChEBI" id="CHEBI:74411"/>
        <dbReference type="ChEBI" id="CHEBI:74415"/>
        <dbReference type="EC" id="2.5.1.75"/>
    </reaction>
</comment>
<comment type="cofactor">
    <cofactor evidence="1">
        <name>Mg(2+)</name>
        <dbReference type="ChEBI" id="CHEBI:18420"/>
    </cofactor>
</comment>
<comment type="subunit">
    <text evidence="1">Monomer.</text>
</comment>
<comment type="similarity">
    <text evidence="1">Belongs to the IPP transferase family.</text>
</comment>
<keyword id="KW-0067">ATP-binding</keyword>
<keyword id="KW-0460">Magnesium</keyword>
<keyword id="KW-0547">Nucleotide-binding</keyword>
<keyword id="KW-0808">Transferase</keyword>
<keyword id="KW-0819">tRNA processing</keyword>
<reference key="1">
    <citation type="journal article" date="2006" name="J. Bacteriol.">
        <title>Complete genome sequence of Yersinia pestis strains Antiqua and Nepal516: evidence of gene reduction in an emerging pathogen.</title>
        <authorList>
            <person name="Chain P.S.G."/>
            <person name="Hu P."/>
            <person name="Malfatti S.A."/>
            <person name="Radnedge L."/>
            <person name="Larimer F."/>
            <person name="Vergez L.M."/>
            <person name="Worsham P."/>
            <person name="Chu M.C."/>
            <person name="Andersen G.L."/>
        </authorList>
    </citation>
    <scope>NUCLEOTIDE SEQUENCE [LARGE SCALE GENOMIC DNA]</scope>
    <source>
        <strain>Nepal516</strain>
    </source>
</reference>
<reference key="2">
    <citation type="submission" date="2009-04" db="EMBL/GenBank/DDBJ databases">
        <title>Yersinia pestis Nepal516A whole genome shotgun sequencing project.</title>
        <authorList>
            <person name="Plunkett G. III"/>
            <person name="Anderson B.D."/>
            <person name="Baumler D.J."/>
            <person name="Burland V."/>
            <person name="Cabot E.L."/>
            <person name="Glasner J.D."/>
            <person name="Mau B."/>
            <person name="Neeno-Eckwall E."/>
            <person name="Perna N.T."/>
            <person name="Munk A.C."/>
            <person name="Tapia R."/>
            <person name="Green L.D."/>
            <person name="Rogers Y.C."/>
            <person name="Detter J.C."/>
            <person name="Bruce D.C."/>
            <person name="Brettin T.S."/>
        </authorList>
    </citation>
    <scope>NUCLEOTIDE SEQUENCE [LARGE SCALE GENOMIC DNA]</scope>
    <source>
        <strain>Nepal516</strain>
    </source>
</reference>
<protein>
    <recommendedName>
        <fullName evidence="1">tRNA dimethylallyltransferase</fullName>
        <ecNumber evidence="1">2.5.1.75</ecNumber>
    </recommendedName>
    <alternativeName>
        <fullName evidence="1">Dimethylallyl diphosphate:tRNA dimethylallyltransferase</fullName>
        <shortName evidence="1">DMAPP:tRNA dimethylallyltransferase</shortName>
        <shortName evidence="1">DMATase</shortName>
    </alternativeName>
    <alternativeName>
        <fullName evidence="1">Isopentenyl-diphosphate:tRNA isopentenyltransferase</fullName>
        <shortName evidence="1">IPP transferase</shortName>
        <shortName evidence="1">IPPT</shortName>
        <shortName evidence="1">IPTase</shortName>
    </alternativeName>
</protein>
<sequence length="313" mass="34785">MNDIENLDRPPAIFIMGPTASGKTALSIALRQRLPVELVSVDSALIYRGMDIGTAKPSAQELALAPHRLIDIRDPAESYSAADFRKDALKEMADITAAGRIPLLVGGTMLYFKALLDGLSPLPSADPQVRQRIEQQASELGWGALHQQLAVIDPVAAARIHPNDPQRLSRALEVFFISGKTLTELTKISGETLPYRVHQFAIAPASRELLHQRIELRFHQMLDAGFEAEARVLFDRGDLHTDLPAIRCVGYRQMWSYLSGEIDYNDMVYRGVCATRQLAKRQMTWLRGWSSVQWLDSDKPGEALDSVIQVVSA</sequence>